<keyword id="KW-0002">3D-structure</keyword>
<keyword id="KW-0025">Alternative splicing</keyword>
<keyword id="KW-0053">Apoptosis</keyword>
<keyword id="KW-0067">ATP-binding</keyword>
<keyword id="KW-0131">Cell cycle</keyword>
<keyword id="KW-0132">Cell division</keyword>
<keyword id="KW-0137">Centromere</keyword>
<keyword id="KW-0158">Chromosome</keyword>
<keyword id="KW-0159">Chromosome partition</keyword>
<keyword id="KW-0945">Host-virus interaction</keyword>
<keyword id="KW-0991">Intellectual disability</keyword>
<keyword id="KW-0418">Kinase</keyword>
<keyword id="KW-0995">Kinetochore</keyword>
<keyword id="KW-0498">Mitosis</keyword>
<keyword id="KW-0547">Nucleotide-binding</keyword>
<keyword id="KW-0539">Nucleus</keyword>
<keyword id="KW-0597">Phosphoprotein</keyword>
<keyword id="KW-0905">Primary microcephaly</keyword>
<keyword id="KW-1267">Proteomics identification</keyword>
<keyword id="KW-1185">Reference proteome</keyword>
<keyword id="KW-0723">Serine/threonine-protein kinase</keyword>
<keyword id="KW-0808">Transferase</keyword>
<keyword id="KW-0832">Ubl conjugation</keyword>
<name>BUB1_HUMAN</name>
<accession>O43683</accession>
<accession>E9PC26</accession>
<accession>F5GXI5</accession>
<accession>O43430</accession>
<accession>O43643</accession>
<accession>O60626</accession>
<accession>Q53QE4</accession>
<proteinExistence type="evidence at protein level"/>
<organism>
    <name type="scientific">Homo sapiens</name>
    <name type="common">Human</name>
    <dbReference type="NCBI Taxonomy" id="9606"/>
    <lineage>
        <taxon>Eukaryota</taxon>
        <taxon>Metazoa</taxon>
        <taxon>Chordata</taxon>
        <taxon>Craniata</taxon>
        <taxon>Vertebrata</taxon>
        <taxon>Euteleostomi</taxon>
        <taxon>Mammalia</taxon>
        <taxon>Eutheria</taxon>
        <taxon>Euarchontoglires</taxon>
        <taxon>Primates</taxon>
        <taxon>Haplorrhini</taxon>
        <taxon>Catarrhini</taxon>
        <taxon>Hominidae</taxon>
        <taxon>Homo</taxon>
    </lineage>
</organism>
<reference key="1">
    <citation type="journal article" date="1998" name="Nature">
        <title>Mutations of mitotic checkpoint genes in human cancers.</title>
        <authorList>
            <person name="Cahill D.P."/>
            <person name="Lengauer C."/>
            <person name="Yu J."/>
            <person name="Riggins G.J."/>
            <person name="Willson J.K.V."/>
            <person name="Markowitz S.D."/>
            <person name="Kinzler K.W."/>
            <person name="Vogelstein B."/>
        </authorList>
    </citation>
    <scope>NUCLEOTIDE SEQUENCE [MRNA] (ISOFORM 1)</scope>
    <scope>VARIANT TYR-492</scope>
</reference>
<reference key="2">
    <citation type="journal article" date="1998" name="Cell Growth Differ.">
        <title>Human Bub1: a putative spindle checkpoint kinase closely linked to cell proliferation.</title>
        <authorList>
            <person name="Ouyang B."/>
            <person name="Lan Z."/>
            <person name="Meadows J."/>
            <person name="Pan H."/>
            <person name="Fukasawa K."/>
            <person name="Li W."/>
            <person name="Dai W."/>
        </authorList>
    </citation>
    <scope>NUCLEOTIDE SEQUENCE [MRNA] (ISOFORM 1)</scope>
</reference>
<reference key="3">
    <citation type="journal article" date="1998" name="J. Cell Biol.">
        <title>The human homologue of Bub3 is required for kinetochore localization of Bub1 and a Mad3/Bub1-related protein kinase.</title>
        <authorList>
            <person name="Taylor S.S."/>
            <person name="Ha E."/>
            <person name="McKeon F."/>
        </authorList>
    </citation>
    <scope>NUCLEOTIDE SEQUENCE [MRNA] (ISOFORM 1)</scope>
</reference>
<reference key="4">
    <citation type="journal article" date="1999" name="Biochem. Biophys. Res. Commun.">
        <title>Phosphorylation of human MAD1 by the BUB1 kinase in vitro.</title>
        <authorList>
            <person name="Seeley T.W."/>
            <person name="Wang L."/>
            <person name="Zhen J.Y."/>
        </authorList>
    </citation>
    <scope>NUCLEOTIDE SEQUENCE [MRNA] (ISOFORM 1)</scope>
    <scope>FUNCTION</scope>
    <scope>PHOSPHORYLATION</scope>
    <scope>INTERACTION WITH BUB3 AND MAD1L1</scope>
    <scope>MUTAGENESIS OF LYS-821</scope>
    <source>
        <tissue>Testis</tissue>
    </source>
</reference>
<reference key="5">
    <citation type="journal article" date="1999" name="Genomics">
        <title>Characterization of MAD2B and other mitotic spindle checkpoint genes.</title>
        <authorList>
            <person name="Cahill D.P."/>
            <person name="da Costa L.T."/>
            <person name="Carson-Walter E.B."/>
            <person name="Kinzler K.W."/>
            <person name="Vogelstein B."/>
            <person name="Lengauer C."/>
        </authorList>
    </citation>
    <scope>NUCLEOTIDE SEQUENCE [GENOMIC DNA] (ISOFORM 1)</scope>
    <scope>VARIANTS ASP-36 AND ARG-648</scope>
</reference>
<reference key="6">
    <citation type="journal article" date="2005" name="Nature">
        <title>Generation and annotation of the DNA sequences of human chromosomes 2 and 4.</title>
        <authorList>
            <person name="Hillier L.W."/>
            <person name="Graves T.A."/>
            <person name="Fulton R.S."/>
            <person name="Fulton L.A."/>
            <person name="Pepin K.H."/>
            <person name="Minx P."/>
            <person name="Wagner-McPherson C."/>
            <person name="Layman D."/>
            <person name="Wylie K."/>
            <person name="Sekhon M."/>
            <person name="Becker M.C."/>
            <person name="Fewell G.A."/>
            <person name="Delehaunty K.D."/>
            <person name="Miner T.L."/>
            <person name="Nash W.E."/>
            <person name="Kremitzki C."/>
            <person name="Oddy L."/>
            <person name="Du H."/>
            <person name="Sun H."/>
            <person name="Bradshaw-Cordum H."/>
            <person name="Ali J."/>
            <person name="Carter J."/>
            <person name="Cordes M."/>
            <person name="Harris A."/>
            <person name="Isak A."/>
            <person name="van Brunt A."/>
            <person name="Nguyen C."/>
            <person name="Du F."/>
            <person name="Courtney L."/>
            <person name="Kalicki J."/>
            <person name="Ozersky P."/>
            <person name="Abbott S."/>
            <person name="Armstrong J."/>
            <person name="Belter E.A."/>
            <person name="Caruso L."/>
            <person name="Cedroni M."/>
            <person name="Cotton M."/>
            <person name="Davidson T."/>
            <person name="Desai A."/>
            <person name="Elliott G."/>
            <person name="Erb T."/>
            <person name="Fronick C."/>
            <person name="Gaige T."/>
            <person name="Haakenson W."/>
            <person name="Haglund K."/>
            <person name="Holmes A."/>
            <person name="Harkins R."/>
            <person name="Kim K."/>
            <person name="Kruchowski S.S."/>
            <person name="Strong C.M."/>
            <person name="Grewal N."/>
            <person name="Goyea E."/>
            <person name="Hou S."/>
            <person name="Levy A."/>
            <person name="Martinka S."/>
            <person name="Mead K."/>
            <person name="McLellan M.D."/>
            <person name="Meyer R."/>
            <person name="Randall-Maher J."/>
            <person name="Tomlinson C."/>
            <person name="Dauphin-Kohlberg S."/>
            <person name="Kozlowicz-Reilly A."/>
            <person name="Shah N."/>
            <person name="Swearengen-Shahid S."/>
            <person name="Snider J."/>
            <person name="Strong J.T."/>
            <person name="Thompson J."/>
            <person name="Yoakum M."/>
            <person name="Leonard S."/>
            <person name="Pearman C."/>
            <person name="Trani L."/>
            <person name="Radionenko M."/>
            <person name="Waligorski J.E."/>
            <person name="Wang C."/>
            <person name="Rock S.M."/>
            <person name="Tin-Wollam A.-M."/>
            <person name="Maupin R."/>
            <person name="Latreille P."/>
            <person name="Wendl M.C."/>
            <person name="Yang S.-P."/>
            <person name="Pohl C."/>
            <person name="Wallis J.W."/>
            <person name="Spieth J."/>
            <person name="Bieri T.A."/>
            <person name="Berkowicz N."/>
            <person name="Nelson J.O."/>
            <person name="Osborne J."/>
            <person name="Ding L."/>
            <person name="Meyer R."/>
            <person name="Sabo A."/>
            <person name="Shotland Y."/>
            <person name="Sinha P."/>
            <person name="Wohldmann P.E."/>
            <person name="Cook L.L."/>
            <person name="Hickenbotham M.T."/>
            <person name="Eldred J."/>
            <person name="Williams D."/>
            <person name="Jones T.A."/>
            <person name="She X."/>
            <person name="Ciccarelli F.D."/>
            <person name="Izaurralde E."/>
            <person name="Taylor J."/>
            <person name="Schmutz J."/>
            <person name="Myers R.M."/>
            <person name="Cox D.R."/>
            <person name="Huang X."/>
            <person name="McPherson J.D."/>
            <person name="Mardis E.R."/>
            <person name="Clifton S.W."/>
            <person name="Warren W.C."/>
            <person name="Chinwalla A.T."/>
            <person name="Eddy S.R."/>
            <person name="Marra M.A."/>
            <person name="Ovcharenko I."/>
            <person name="Furey T.S."/>
            <person name="Miller W."/>
            <person name="Eichler E.E."/>
            <person name="Bork P."/>
            <person name="Suyama M."/>
            <person name="Torrents D."/>
            <person name="Waterston R.H."/>
            <person name="Wilson R.K."/>
        </authorList>
    </citation>
    <scope>NUCLEOTIDE SEQUENCE [LARGE SCALE GENOMIC DNA]</scope>
</reference>
<reference key="7">
    <citation type="submission" date="2005-07" db="EMBL/GenBank/DDBJ databases">
        <authorList>
            <person name="Mural R.J."/>
            <person name="Istrail S."/>
            <person name="Sutton G."/>
            <person name="Florea L."/>
            <person name="Halpern A.L."/>
            <person name="Mobarry C.M."/>
            <person name="Lippert R."/>
            <person name="Walenz B."/>
            <person name="Shatkay H."/>
            <person name="Dew I."/>
            <person name="Miller J.R."/>
            <person name="Flanigan M.J."/>
            <person name="Edwards N.J."/>
            <person name="Bolanos R."/>
            <person name="Fasulo D."/>
            <person name="Halldorsson B.V."/>
            <person name="Hannenhalli S."/>
            <person name="Turner R."/>
            <person name="Yooseph S."/>
            <person name="Lu F."/>
            <person name="Nusskern D.R."/>
            <person name="Shue B.C."/>
            <person name="Zheng X.H."/>
            <person name="Zhong F."/>
            <person name="Delcher A.L."/>
            <person name="Huson D.H."/>
            <person name="Kravitz S.A."/>
            <person name="Mouchard L."/>
            <person name="Reinert K."/>
            <person name="Remington K.A."/>
            <person name="Clark A.G."/>
            <person name="Waterman M.S."/>
            <person name="Eichler E.E."/>
            <person name="Adams M.D."/>
            <person name="Hunkapiller M.W."/>
            <person name="Myers E.W."/>
            <person name="Venter J.C."/>
        </authorList>
    </citation>
    <scope>NUCLEOTIDE SEQUENCE [LARGE SCALE GENOMIC DNA]</scope>
</reference>
<reference key="8">
    <citation type="journal article" date="2004" name="Genome Res.">
        <title>The status, quality, and expansion of the NIH full-length cDNA project: the Mammalian Gene Collection (MGC).</title>
        <authorList>
            <consortium name="The MGC Project Team"/>
        </authorList>
    </citation>
    <scope>NUCLEOTIDE SEQUENCE [LARGE SCALE MRNA] (ISOFORM 1)</scope>
    <source>
        <tissue>Lung</tissue>
    </source>
</reference>
<reference key="9">
    <citation type="journal article" date="1997" name="Genomics">
        <title>Mammalian BUB1 protein kinases: map positions and in vivo expression.</title>
        <authorList>
            <person name="Pangilinan F."/>
            <person name="Li Q."/>
            <person name="Weaver T."/>
            <person name="Lewis B.C."/>
            <person name="Dang C.V."/>
            <person name="Spencer F."/>
        </authorList>
    </citation>
    <scope>NUCLEOTIDE SEQUENCE [MRNA] OF 276-1085</scope>
</reference>
<reference key="10">
    <citation type="journal article" date="2004" name="J. Cell Sci.">
        <title>Bub1 is required for kinetochore localization of BubR1, Cenp-E, Cenp-F and Mad2, and chromosome congression.</title>
        <authorList>
            <person name="Johnson V.L."/>
            <person name="Scott M.I."/>
            <person name="Holt S.V."/>
            <person name="Hussein D."/>
            <person name="Taylor S.S."/>
        </authorList>
    </citation>
    <scope>FUNCTION</scope>
    <scope>SUBCELLULAR LOCATION</scope>
</reference>
<reference key="11">
    <citation type="journal article" date="2004" name="Mol. Cell">
        <title>Phosphorylation of Cdc20 by Bub1 provides a catalytic mechanism for APC/C inhibition by the spindle checkpoint.</title>
        <authorList>
            <person name="Tang Z."/>
            <person name="Shu H."/>
            <person name="Oncel D."/>
            <person name="Chen S."/>
            <person name="Yu H."/>
        </authorList>
    </citation>
    <scope>FUNCTION</scope>
    <scope>PHOSPHORYLATION</scope>
    <scope>INTERACTION WITH BUB3</scope>
</reference>
<reference key="12">
    <citation type="journal article" date="2005" name="Curr. Biol.">
        <title>Human Bub1 defines the persistent cohesion site along the mitotic chromosome by affecting Shugoshin localization.</title>
        <authorList>
            <person name="Kitajima T.S."/>
            <person name="Hauf S."/>
            <person name="Ohsugi M."/>
            <person name="Yamamoto T."/>
            <person name="Watanabe Y."/>
        </authorList>
    </citation>
    <scope>FUNCTION</scope>
</reference>
<reference key="13">
    <citation type="journal article" date="2006" name="Mol. Biol. Cell">
        <title>Phosphorylation- and polo-box-dependent binding of Plk1 to Bub1 is required for the kinetochore localization of Plk1.</title>
        <authorList>
            <person name="Qi W."/>
            <person name="Tang Z."/>
            <person name="Yu H."/>
        </authorList>
    </citation>
    <scope>FUNCTION</scope>
    <scope>SUBCELLULAR LOCATION</scope>
    <scope>INTERACTION WITH PLK1</scope>
    <scope>PHOSPHORYLATION AT THR-609</scope>
    <scope>MUTAGENESIS OF THR-609</scope>
</reference>
<reference key="14">
    <citation type="journal article" date="2007" name="Dev. Cell">
        <title>Human Blinkin/AF15q14 is required for chromosome alignment and the mitotic checkpoint through direct interaction with Bub1 and BubR1.</title>
        <authorList>
            <person name="Kiyomitsu T."/>
            <person name="Obuse C."/>
            <person name="Yanagida M."/>
        </authorList>
    </citation>
    <scope>SUBCELLULAR LOCATION</scope>
    <scope>INTERACTION WITH KNL1</scope>
    <scope>MUTAGENESIS OF ALA-106 AND LEU-122</scope>
</reference>
<reference key="15">
    <citation type="journal article" date="2007" name="J. Biol. Chem.">
        <title>KEN-box-dependent degradation of the Bub1 spindle checkpoint kinase by the anaphase-promoting complex/cyclosome.</title>
        <authorList>
            <person name="Qi W."/>
            <person name="Yu H."/>
        </authorList>
    </citation>
    <scope>FUNCTION</scope>
    <scope>SUBCELLULAR LOCATION</scope>
    <scope>UBIQUITINATION</scope>
    <scope>DOMAIN KEN BOX</scope>
    <scope>MUTAGENESIS OF LYS-535; GLU-536; ASN-537; LYS-625; GLU-626 AND ASN-627</scope>
</reference>
<reference key="16">
    <citation type="journal article" date="2007" name="Science">
        <title>ATM and ATR substrate analysis reveals extensive protein networks responsive to DNA damage.</title>
        <authorList>
            <person name="Matsuoka S."/>
            <person name="Ballif B.A."/>
            <person name="Smogorzewska A."/>
            <person name="McDonald E.R. III"/>
            <person name="Hurov K.E."/>
            <person name="Luo J."/>
            <person name="Bakalarski C.E."/>
            <person name="Zhao Z."/>
            <person name="Solimini N."/>
            <person name="Lerenthal Y."/>
            <person name="Shiloh Y."/>
            <person name="Gygi S.P."/>
            <person name="Elledge S.J."/>
        </authorList>
    </citation>
    <scope>PHOSPHORYLATION [LARGE SCALE ANALYSIS] AT SER-314</scope>
    <scope>IDENTIFICATION BY MASS SPECTROMETRY [LARGE SCALE ANALYSIS]</scope>
    <source>
        <tissue>Embryonic kidney</tissue>
    </source>
</reference>
<reference key="17">
    <citation type="journal article" date="2008" name="Mol. Cell">
        <title>Kinase-selective enrichment enables quantitative phosphoproteomics of the kinome across the cell cycle.</title>
        <authorList>
            <person name="Daub H."/>
            <person name="Olsen J.V."/>
            <person name="Bairlein M."/>
            <person name="Gnad F."/>
            <person name="Oppermann F.S."/>
            <person name="Korner R."/>
            <person name="Greff Z."/>
            <person name="Keri G."/>
            <person name="Stemmann O."/>
            <person name="Mann M."/>
        </authorList>
    </citation>
    <scope>PHOSPHORYLATION [LARGE SCALE ANALYSIS] AT SER-596 AND SER-655</scope>
    <scope>IDENTIFICATION BY MASS SPECTROMETRY [LARGE SCALE ANALYSIS]</scope>
    <source>
        <tissue>Cervix carcinoma</tissue>
    </source>
</reference>
<reference key="18">
    <citation type="journal article" date="2008" name="Proc. Natl. Acad. Sci. U.S.A.">
        <title>A quantitative atlas of mitotic phosphorylation.</title>
        <authorList>
            <person name="Dephoure N."/>
            <person name="Zhou C."/>
            <person name="Villen J."/>
            <person name="Beausoleil S.A."/>
            <person name="Bakalarski C.E."/>
            <person name="Elledge S.J."/>
            <person name="Gygi S.P."/>
        </authorList>
    </citation>
    <scope>PHOSPHORYLATION [LARGE SCALE ANALYSIS] AT SER-593 AND SER-596</scope>
    <scope>IDENTIFICATION BY MASS SPECTROMETRY [LARGE SCALE ANALYSIS]</scope>
    <source>
        <tissue>Cervix carcinoma</tissue>
    </source>
</reference>
<reference key="19">
    <citation type="journal article" date="2009" name="Anal. Chem.">
        <title>Lys-N and trypsin cover complementary parts of the phosphoproteome in a refined SCX-based approach.</title>
        <authorList>
            <person name="Gauci S."/>
            <person name="Helbig A.O."/>
            <person name="Slijper M."/>
            <person name="Krijgsveld J."/>
            <person name="Heck A.J."/>
            <person name="Mohammed S."/>
        </authorList>
    </citation>
    <scope>IDENTIFICATION BY MASS SPECTROMETRY [LARGE SCALE ANALYSIS]</scope>
</reference>
<reference key="20">
    <citation type="journal article" date="2009" name="J. Virol.">
        <title>Simian virus 40 large T antigen disrupts genome integrity and activates a DNA damage response via Bub1 binding.</title>
        <authorList>
            <person name="Hein J."/>
            <person name="Boichuk S."/>
            <person name="Wu J."/>
            <person name="Cheng Y."/>
            <person name="Freire R."/>
            <person name="Jat P.S."/>
            <person name="Roberts T.M."/>
            <person name="Gjoerup O.V."/>
        </authorList>
    </citation>
    <scope>INTERACTION WITH SV40 LARGE T ANTIGEN (MICROBIAL INFECTION)</scope>
</reference>
<reference key="21">
    <citation type="journal article" date="2009" name="J. Cell Biol.">
        <title>Bub1 regulates chromosome segregation in a kinetochore-independent manner.</title>
        <authorList>
            <person name="Klebig C."/>
            <person name="Korinth D."/>
            <person name="Meraldi P."/>
        </authorList>
    </citation>
    <scope>FUNCTION</scope>
    <scope>MUTAGENESIS OF ALA-130</scope>
    <scope>CHARACTERIZATION OF VARIANTS CYS-259 AND ASN-265</scope>
</reference>
<reference key="22">
    <citation type="journal article" date="2009" name="Mol. Cell. Proteomics">
        <title>Large-scale proteomics analysis of the human kinome.</title>
        <authorList>
            <person name="Oppermann F.S."/>
            <person name="Gnad F."/>
            <person name="Olsen J.V."/>
            <person name="Hornberger R."/>
            <person name="Greff Z."/>
            <person name="Keri G."/>
            <person name="Mann M."/>
            <person name="Daub H."/>
        </authorList>
    </citation>
    <scope>PHOSPHORYLATION [LARGE SCALE ANALYSIS] AT SER-314; SER-375; SER-563; SER-596 AND SER-655</scope>
    <scope>IDENTIFICATION BY MASS SPECTROMETRY [LARGE SCALE ANALYSIS]</scope>
</reference>
<reference key="23">
    <citation type="journal article" date="2009" name="Sci. Signal.">
        <title>Quantitative phosphoproteomic analysis of T cell receptor signaling reveals system-wide modulation of protein-protein interactions.</title>
        <authorList>
            <person name="Mayya V."/>
            <person name="Lundgren D.H."/>
            <person name="Hwang S.-I."/>
            <person name="Rezaul K."/>
            <person name="Wu L."/>
            <person name="Eng J.K."/>
            <person name="Rodionov V."/>
            <person name="Han D.K."/>
        </authorList>
    </citation>
    <scope>PHOSPHORYLATION [LARGE SCALE ANALYSIS] AT SER-563; SER-593 AND SER-596</scope>
    <scope>IDENTIFICATION BY MASS SPECTROMETRY [LARGE SCALE ANALYSIS]</scope>
    <source>
        <tissue>Leukemic T-cell</tissue>
    </source>
</reference>
<reference key="24">
    <citation type="journal article" date="2010" name="Nature">
        <title>Phosphorylation of the CPC by Cdk1 promotes chromosome bi-orientation.</title>
        <authorList>
            <person name="Tsukahara T."/>
            <person name="Tanno Y."/>
            <person name="Watanabe Y."/>
        </authorList>
    </citation>
    <scope>FUNCTION</scope>
</reference>
<reference key="25">
    <citation type="journal article" date="2010" name="Sci. Signal.">
        <title>Quantitative phosphoproteomics reveals widespread full phosphorylation site occupancy during mitosis.</title>
        <authorList>
            <person name="Olsen J.V."/>
            <person name="Vermeulen M."/>
            <person name="Santamaria A."/>
            <person name="Kumar C."/>
            <person name="Miller M.L."/>
            <person name="Jensen L.J."/>
            <person name="Gnad F."/>
            <person name="Cox J."/>
            <person name="Jensen T.S."/>
            <person name="Nigg E.A."/>
            <person name="Brunak S."/>
            <person name="Mann M."/>
        </authorList>
    </citation>
    <scope>PHOSPHORYLATION [LARGE SCALE ANALYSIS] AT SER-593 AND SER-596</scope>
    <scope>IDENTIFICATION BY MASS SPECTROMETRY [LARGE SCALE ANALYSIS]</scope>
    <source>
        <tissue>Cervix carcinoma</tissue>
    </source>
</reference>
<reference key="26">
    <citation type="journal article" date="2011" name="BMC Syst. Biol.">
        <title>Initial characterization of the human central proteome.</title>
        <authorList>
            <person name="Burkard T.R."/>
            <person name="Planyavsky M."/>
            <person name="Kaupe I."/>
            <person name="Breitwieser F.P."/>
            <person name="Buerckstuemmer T."/>
            <person name="Bennett K.L."/>
            <person name="Superti-Furga G."/>
            <person name="Colinge J."/>
        </authorList>
    </citation>
    <scope>IDENTIFICATION BY MASS SPECTROMETRY [LARGE SCALE ANALYSIS]</scope>
</reference>
<reference key="27">
    <citation type="journal article" date="2011" name="Sci. Signal.">
        <title>System-wide temporal characterization of the proteome and phosphoproteome of human embryonic stem cell differentiation.</title>
        <authorList>
            <person name="Rigbolt K.T."/>
            <person name="Prokhorova T.A."/>
            <person name="Akimov V."/>
            <person name="Henningsen J."/>
            <person name="Johansen P.T."/>
            <person name="Kratchmarova I."/>
            <person name="Kassem M."/>
            <person name="Mann M."/>
            <person name="Olsen J.V."/>
            <person name="Blagoev B."/>
        </authorList>
    </citation>
    <scope>PHOSPHORYLATION [LARGE SCALE ANALYSIS] AT SER-596</scope>
    <scope>IDENTIFICATION BY MASS SPECTROMETRY [LARGE SCALE ANALYSIS]</scope>
</reference>
<reference key="28">
    <citation type="journal article" date="2013" name="J. Proteome Res.">
        <title>Toward a comprehensive characterization of a human cancer cell phosphoproteome.</title>
        <authorList>
            <person name="Zhou H."/>
            <person name="Di Palma S."/>
            <person name="Preisinger C."/>
            <person name="Peng M."/>
            <person name="Polat A.N."/>
            <person name="Heck A.J."/>
            <person name="Mohammed S."/>
        </authorList>
    </citation>
    <scope>PHOSPHORYLATION [LARGE SCALE ANALYSIS] AT SER-307; SER-331; SER-525; SER-593; SER-596; SER-655; SER-661; SER-668 AND SER-672</scope>
    <scope>IDENTIFICATION BY MASS SPECTROMETRY [LARGE SCALE ANALYSIS]</scope>
    <source>
        <tissue>Cervix carcinoma</tissue>
        <tissue>Erythroleukemia</tissue>
    </source>
</reference>
<reference key="29">
    <citation type="journal article" date="2015" name="J. Virol.">
        <title>Bub1 in Complex with LANA Recruits PCNA To Regulate Kaposi's Sarcoma-Associated Herpesvirus Latent Replication and DNA Translesion Synthesis.</title>
        <authorList>
            <person name="Sun Z."/>
            <person name="Jha H.C."/>
            <person name="Robertson E.S."/>
        </authorList>
    </citation>
    <scope>INTERACTION WITH HERPES VIRUS 8 PROTEIN LANA1 (MICROBIAL INFECTION)</scope>
</reference>
<reference key="30">
    <citation type="journal article" date="2022" name="Sci. Adv.">
        <title>Biallelic BUB1 mutations cause microcephaly, developmental delay, and variable effects on cohesion and chromosome segregation.</title>
        <authorList>
            <person name="Carvalhal S."/>
            <person name="Bader I."/>
            <person name="Rooimans M.A."/>
            <person name="Oostra A.B."/>
            <person name="Balk J.A."/>
            <person name="Feichtinger R.G."/>
            <person name="Beichler C."/>
            <person name="Speicher M.R."/>
            <person name="van Hagen J.M."/>
            <person name="Waisfisz Q."/>
            <person name="van Haelst M."/>
            <person name="Bruijn M."/>
            <person name="Tavares A."/>
            <person name="Mayr J.A."/>
            <person name="Wolthuis R.M.F."/>
            <person name="Oliveira R.A."/>
            <person name="de Lange J."/>
        </authorList>
    </citation>
    <scope>INVOLVEMENT IN MCPH30</scope>
    <scope>FUNCTION</scope>
</reference>
<reference key="31">
    <citation type="journal article" date="2003" name="Hum. Mutat.">
        <title>A double missense variation of the BUB1 gene and a defective mitotic spindle checkpoint in the pancreatic cancer cell line Hs766T.</title>
        <authorList>
            <person name="Hempen P.M."/>
            <person name="Kurpad H."/>
            <person name="Calhoun E.S."/>
            <person name="Abraham S."/>
            <person name="Kern S.E."/>
        </authorList>
    </citation>
    <scope>VARIANTS PANCREATIC CANCER CYS-259 AND ASN-265</scope>
</reference>
<reference key="32">
    <citation type="journal article" date="2007" name="Nature">
        <title>Patterns of somatic mutation in human cancer genomes.</title>
        <authorList>
            <person name="Greenman C."/>
            <person name="Stephens P."/>
            <person name="Smith R."/>
            <person name="Dalgliesh G.L."/>
            <person name="Hunter C."/>
            <person name="Bignell G."/>
            <person name="Davies H."/>
            <person name="Teague J."/>
            <person name="Butler A."/>
            <person name="Stevens C."/>
            <person name="Edkins S."/>
            <person name="O'Meara S."/>
            <person name="Vastrik I."/>
            <person name="Schmidt E.E."/>
            <person name="Avis T."/>
            <person name="Barthorpe S."/>
            <person name="Bhamra G."/>
            <person name="Buck G."/>
            <person name="Choudhury B."/>
            <person name="Clements J."/>
            <person name="Cole J."/>
            <person name="Dicks E."/>
            <person name="Forbes S."/>
            <person name="Gray K."/>
            <person name="Halliday K."/>
            <person name="Harrison R."/>
            <person name="Hills K."/>
            <person name="Hinton J."/>
            <person name="Jenkinson A."/>
            <person name="Jones D."/>
            <person name="Menzies A."/>
            <person name="Mironenko T."/>
            <person name="Perry J."/>
            <person name="Raine K."/>
            <person name="Richardson D."/>
            <person name="Shepherd R."/>
            <person name="Small A."/>
            <person name="Tofts C."/>
            <person name="Varian J."/>
            <person name="Webb T."/>
            <person name="West S."/>
            <person name="Widaa S."/>
            <person name="Yates A."/>
            <person name="Cahill D.P."/>
            <person name="Louis D.N."/>
            <person name="Goldstraw P."/>
            <person name="Nicholson A.G."/>
            <person name="Brasseur F."/>
            <person name="Looijenga L."/>
            <person name="Weber B.L."/>
            <person name="Chiew Y.-E."/>
            <person name="DeFazio A."/>
            <person name="Greaves M.F."/>
            <person name="Green A.R."/>
            <person name="Campbell P."/>
            <person name="Birney E."/>
            <person name="Easton D.F."/>
            <person name="Chenevix-Trench G."/>
            <person name="Tan M.-H."/>
            <person name="Khoo S.K."/>
            <person name="Teh B.T."/>
            <person name="Yuen S.T."/>
            <person name="Leung S.Y."/>
            <person name="Wooster R."/>
            <person name="Futreal P.A."/>
            <person name="Stratton M.R."/>
        </authorList>
    </citation>
    <scope>VARIANTS [LARGE SCALE ANALYSIS] ASP-20 AND ASP-534</scope>
</reference>
<protein>
    <recommendedName>
        <fullName>Mitotic checkpoint serine/threonine-protein kinase BUB1</fullName>
        <shortName>hBUB1</shortName>
        <ecNumber>2.7.11.1</ecNumber>
    </recommendedName>
    <alternativeName>
        <fullName>BUB1A</fullName>
    </alternativeName>
</protein>
<evidence type="ECO:0000250" key="1"/>
<evidence type="ECO:0000255" key="2"/>
<evidence type="ECO:0000255" key="3">
    <source>
        <dbReference type="PROSITE-ProRule" id="PRU00159"/>
    </source>
</evidence>
<evidence type="ECO:0000255" key="4">
    <source>
        <dbReference type="PROSITE-ProRule" id="PRU00822"/>
    </source>
</evidence>
<evidence type="ECO:0000255" key="5">
    <source>
        <dbReference type="PROSITE-ProRule" id="PRU10027"/>
    </source>
</evidence>
<evidence type="ECO:0000256" key="6">
    <source>
        <dbReference type="SAM" id="MobiDB-lite"/>
    </source>
</evidence>
<evidence type="ECO:0000269" key="7">
    <source>
    </source>
</evidence>
<evidence type="ECO:0000269" key="8">
    <source>
    </source>
</evidence>
<evidence type="ECO:0000269" key="9">
    <source>
    </source>
</evidence>
<evidence type="ECO:0000269" key="10">
    <source>
    </source>
</evidence>
<evidence type="ECO:0000269" key="11">
    <source>
    </source>
</evidence>
<evidence type="ECO:0000269" key="12">
    <source>
    </source>
</evidence>
<evidence type="ECO:0000269" key="13">
    <source>
    </source>
</evidence>
<evidence type="ECO:0000269" key="14">
    <source>
    </source>
</evidence>
<evidence type="ECO:0000269" key="15">
    <source>
    </source>
</evidence>
<evidence type="ECO:0000269" key="16">
    <source>
    </source>
</evidence>
<evidence type="ECO:0000269" key="17">
    <source>
    </source>
</evidence>
<evidence type="ECO:0000269" key="18">
    <source>
    </source>
</evidence>
<evidence type="ECO:0000269" key="19">
    <source>
    </source>
</evidence>
<evidence type="ECO:0000269" key="20">
    <source>
    </source>
</evidence>
<evidence type="ECO:0000269" key="21">
    <source>
    </source>
</evidence>
<evidence type="ECO:0000269" key="22">
    <source>
    </source>
</evidence>
<evidence type="ECO:0000305" key="23"/>
<evidence type="ECO:0000305" key="24">
    <source>
    </source>
</evidence>
<evidence type="ECO:0000305" key="25">
    <source>
    </source>
</evidence>
<evidence type="ECO:0000305" key="26">
    <source>
    </source>
</evidence>
<evidence type="ECO:0000305" key="27">
    <source>
    </source>
</evidence>
<evidence type="ECO:0007744" key="28">
    <source>
    </source>
</evidence>
<evidence type="ECO:0007744" key="29">
    <source>
    </source>
</evidence>
<evidence type="ECO:0007744" key="30">
    <source>
    </source>
</evidence>
<evidence type="ECO:0007744" key="31">
    <source>
    </source>
</evidence>
<evidence type="ECO:0007744" key="32">
    <source>
    </source>
</evidence>
<evidence type="ECO:0007744" key="33">
    <source>
    </source>
</evidence>
<evidence type="ECO:0007744" key="34">
    <source>
    </source>
</evidence>
<evidence type="ECO:0007744" key="35">
    <source>
    </source>
</evidence>
<evidence type="ECO:0007829" key="36">
    <source>
        <dbReference type="PDB" id="4A1G"/>
    </source>
</evidence>
<evidence type="ECO:0007829" key="37">
    <source>
        <dbReference type="PDB" id="4QPM"/>
    </source>
</evidence>
<evidence type="ECO:0007829" key="38">
    <source>
        <dbReference type="PDB" id="5DMZ"/>
    </source>
</evidence>
<evidence type="ECO:0007829" key="39">
    <source>
        <dbReference type="PDB" id="6F7B"/>
    </source>
</evidence>
<evidence type="ECO:0007829" key="40">
    <source>
        <dbReference type="PDB" id="7B1F"/>
    </source>
</evidence>
<feature type="chain" id="PRO_0000085671" description="Mitotic checkpoint serine/threonine-protein kinase BUB1">
    <location>
        <begin position="1"/>
        <end position="1085"/>
    </location>
</feature>
<feature type="domain" description="BUB1 N-terminal" evidence="4">
    <location>
        <begin position="11"/>
        <end position="182"/>
    </location>
</feature>
<feature type="domain" description="Protein kinase" evidence="3">
    <location>
        <begin position="787"/>
        <end position="1085"/>
    </location>
</feature>
<feature type="region of interest" description="Necessary for kinetochore localization">
    <location>
        <begin position="1"/>
        <end position="146"/>
    </location>
</feature>
<feature type="region of interest" description="Necessary for interaction with KNL1" evidence="16">
    <location>
        <begin position="99"/>
        <end position="132"/>
    </location>
</feature>
<feature type="region of interest" description="Necessary for interaction with BUB3">
    <location>
        <begin position="229"/>
        <end position="256"/>
    </location>
</feature>
<feature type="region of interest" description="Disordered" evidence="6">
    <location>
        <begin position="305"/>
        <end position="333"/>
    </location>
</feature>
<feature type="region of interest" description="Essential for loading of BUBR1, MAD1L1 and MAD2L1 to kinetochores">
    <location>
        <begin position="458"/>
        <end position="476"/>
    </location>
</feature>
<feature type="region of interest" description="Disordered" evidence="6">
    <location>
        <begin position="538"/>
        <end position="570"/>
    </location>
</feature>
<feature type="short sequence motif" description="Nuclear localization signal" evidence="2">
    <location>
        <begin position="58"/>
        <end position="65"/>
    </location>
</feature>
<feature type="short sequence motif" description="KEN box 1">
    <location>
        <begin position="535"/>
        <end position="537"/>
    </location>
</feature>
<feature type="short sequence motif" description="KEN box 2">
    <location>
        <begin position="625"/>
        <end position="627"/>
    </location>
</feature>
<feature type="compositionally biased region" description="Basic and acidic residues" evidence="6">
    <location>
        <begin position="306"/>
        <end position="319"/>
    </location>
</feature>
<feature type="compositionally biased region" description="Basic and acidic residues" evidence="6">
    <location>
        <begin position="553"/>
        <end position="570"/>
    </location>
</feature>
<feature type="active site" description="Proton acceptor" evidence="3 5">
    <location>
        <position position="917"/>
    </location>
</feature>
<feature type="binding site" evidence="3">
    <location>
        <begin position="793"/>
        <end position="801"/>
    </location>
    <ligand>
        <name>ATP</name>
        <dbReference type="ChEBI" id="CHEBI:30616"/>
    </ligand>
</feature>
<feature type="binding site" evidence="3">
    <location>
        <position position="821"/>
    </location>
    <ligand>
        <name>ATP</name>
        <dbReference type="ChEBI" id="CHEBI:30616"/>
    </ligand>
</feature>
<feature type="modified residue" description="Phosphoserine" evidence="35">
    <location>
        <position position="307"/>
    </location>
</feature>
<feature type="modified residue" description="Phosphoserine" evidence="28 31">
    <location>
        <position position="314"/>
    </location>
</feature>
<feature type="modified residue" description="Phosphoserine" evidence="35">
    <location>
        <position position="331"/>
    </location>
</feature>
<feature type="modified residue" description="Phosphoserine" evidence="31">
    <location>
        <position position="375"/>
    </location>
</feature>
<feature type="modified residue" description="Phosphoserine" evidence="35">
    <location>
        <position position="525"/>
    </location>
</feature>
<feature type="modified residue" description="Phosphoserine" evidence="31 32">
    <location>
        <position position="563"/>
    </location>
</feature>
<feature type="modified residue" description="Phosphoserine" evidence="29 32 33 35">
    <location>
        <position position="593"/>
    </location>
</feature>
<feature type="modified residue" description="Phosphoserine" evidence="29 30 31 32 33 34 35">
    <location>
        <position position="596"/>
    </location>
</feature>
<feature type="modified residue" description="Phosphothreonine; by CDK1" evidence="13">
    <location>
        <position position="609"/>
    </location>
</feature>
<feature type="modified residue" description="Phosphoserine" evidence="30 31 35">
    <location>
        <position position="655"/>
    </location>
</feature>
<feature type="modified residue" description="Phosphoserine" evidence="35">
    <location>
        <position position="661"/>
    </location>
</feature>
<feature type="modified residue" description="Phosphoserine" evidence="35">
    <location>
        <position position="668"/>
    </location>
</feature>
<feature type="modified residue" description="Phosphoserine" evidence="35">
    <location>
        <position position="672"/>
    </location>
</feature>
<feature type="splice variant" id="VSP_054760" description="In isoform 3." evidence="23">
    <location>
        <begin position="10"/>
        <end position="29"/>
    </location>
</feature>
<feature type="splice variant" id="VSP_054761" description="In isoform 2." evidence="23">
    <location>
        <begin position="876"/>
        <end position="932"/>
    </location>
</feature>
<feature type="sequence variant" id="VAR_040400" description="In dbSNP:rs35890336." evidence="15">
    <original>G</original>
    <variation>D</variation>
    <location>
        <position position="20"/>
    </location>
</feature>
<feature type="sequence variant" id="VAR_008849" description="In colorectal cancer; dbSNP:rs1801328." evidence="8">
    <original>E</original>
    <variation>D</variation>
    <location>
        <position position="36"/>
    </location>
</feature>
<feature type="sequence variant" id="VAR_015687" description="In pancreatic cancer; associated with N-265; failure to rescue the spindle-assembly checkpoint activity as a result of a deficient recruitment of MAD2L1 and BUBR1 to kinetochores; efficient restoration of chromosome congression; reduced binding to BUB3; rescue of the ability of kinetochores to bind SGO1 and CENPF but not MCAK." evidence="9 18">
    <original>Y</original>
    <variation>C</variation>
    <location>
        <position position="259"/>
    </location>
</feature>
<feature type="sequence variant" id="VAR_015688" description="In pancreatic cancer; associated with C-259; complete rescue of the spindle-assembly checkpoint activity; increased rate of chromosome congression errors." evidence="9 18">
    <original>H</original>
    <variation>N</variation>
    <location>
        <position position="265"/>
    </location>
</feature>
<feature type="sequence variant" id="VAR_008850" description="In colorectal cancer; dbSNP:rs121909055." evidence="22">
    <original>S</original>
    <variation>Y</variation>
    <location>
        <position position="492"/>
    </location>
</feature>
<feature type="sequence variant" id="VAR_040401" description="In dbSNP:rs36109304." evidence="15">
    <original>N</original>
    <variation>D</variation>
    <location>
        <position position="534"/>
    </location>
</feature>
<feature type="sequence variant" id="VAR_008851" description="In colorectal cancer; dbSNP:rs376649190." evidence="8">
    <original>P</original>
    <variation>R</variation>
    <location>
        <position position="648"/>
    </location>
</feature>
<feature type="mutagenesis site" description="Loss of interaction with KNL1." evidence="16">
    <original>A</original>
    <variation>D</variation>
    <variation>W</variation>
    <location>
        <position position="106"/>
    </location>
</feature>
<feature type="mutagenesis site" description="Loss of interaction with KNL1." evidence="16">
    <original>L</original>
    <variation>G</variation>
    <location>
        <position position="122"/>
    </location>
</feature>
<feature type="mutagenesis site" description="Partial rescue of the spindle-assembly checkpoint activity. Increased rate of chromosome congression errors. Impaired localization to kinetochores and loss of kinetochore binding of CENPF, SGO1 and BUBR1 but not of MCAK, MAD1L1 or MAD2L1." evidence="18">
    <original>A</original>
    <variation>S</variation>
    <location>
        <position position="130"/>
    </location>
</feature>
<feature type="mutagenesis site" description="Loss of ubiquitination and CDH1-dependent degradation; when associated with A-536 and A-537." evidence="14">
    <original>K</original>
    <variation>A</variation>
    <location>
        <position position="535"/>
    </location>
</feature>
<feature type="mutagenesis site" description="Loss of ubiquitination and CDH1-dependent degradation; when associated with A-535 and A-537." evidence="14">
    <original>E</original>
    <variation>A</variation>
    <location>
        <position position="536"/>
    </location>
</feature>
<feature type="mutagenesis site" description="Loss of ubiquitination and CDH1-dependent degradation; when associated with A-535 and A-536." evidence="14">
    <original>N</original>
    <variation>A</variation>
    <location>
        <position position="537"/>
    </location>
</feature>
<feature type="mutagenesis site" description="Diminished interaction with PLK1." evidence="13">
    <original>T</original>
    <variation>A</variation>
    <location>
        <position position="609"/>
    </location>
</feature>
<feature type="mutagenesis site" description="Loss of ubiquitination and CDH1-dependent degradation; when associated with A-626 and A-627." evidence="14">
    <original>K</original>
    <variation>A</variation>
    <location>
        <position position="625"/>
    </location>
</feature>
<feature type="mutagenesis site" description="Loss of ubiquitination and CDH1-dependent degradation; when associated with A-625 and A-627." evidence="14">
    <original>E</original>
    <variation>A</variation>
    <location>
        <position position="626"/>
    </location>
</feature>
<feature type="mutagenesis site" description="Loss of ubiquitination and CDH1-dependent degradation; when associated with A-625 and A-626." evidence="14">
    <original>N</original>
    <variation>A</variation>
    <location>
        <position position="627"/>
    </location>
</feature>
<feature type="mutagenesis site" description="Loss of activity." evidence="7">
    <original>K</original>
    <variation>A</variation>
    <location>
        <position position="821"/>
    </location>
</feature>
<feature type="sequence conflict" description="In Ref. 5; AAC06259." evidence="23" ref="5">
    <original>S</original>
    <variation>T</variation>
    <location>
        <position position="70"/>
    </location>
</feature>
<feature type="sequence conflict" description="In Ref. 9; AAC39546." evidence="23" ref="9">
    <original>MKRK</original>
    <variation>IRHE</variation>
    <location>
        <begin position="276"/>
        <end position="279"/>
    </location>
</feature>
<feature type="helix" evidence="36">
    <location>
        <begin position="3"/>
        <end position="14"/>
    </location>
</feature>
<feature type="helix" evidence="36">
    <location>
        <begin position="23"/>
        <end position="35"/>
    </location>
</feature>
<feature type="helix" evidence="36">
    <location>
        <begin position="43"/>
        <end position="56"/>
    </location>
</feature>
<feature type="helix" evidence="36">
    <location>
        <begin position="60"/>
        <end position="62"/>
    </location>
</feature>
<feature type="helix" evidence="36">
    <location>
        <begin position="66"/>
        <end position="76"/>
    </location>
</feature>
<feature type="helix" evidence="36">
    <location>
        <begin position="82"/>
        <end position="90"/>
    </location>
</feature>
<feature type="turn" evidence="36">
    <location>
        <begin position="91"/>
        <end position="97"/>
    </location>
</feature>
<feature type="helix" evidence="36">
    <location>
        <begin position="99"/>
        <end position="111"/>
    </location>
</feature>
<feature type="helix" evidence="36">
    <location>
        <begin position="115"/>
        <end position="127"/>
    </location>
</feature>
<feature type="helix" evidence="36">
    <location>
        <begin position="133"/>
        <end position="145"/>
    </location>
</feature>
<feature type="helix" evidence="40">
    <location>
        <begin position="462"/>
        <end position="471"/>
    </location>
</feature>
<feature type="helix" evidence="40">
    <location>
        <begin position="472"/>
        <end position="475"/>
    </location>
</feature>
<feature type="strand" evidence="39">
    <location>
        <begin position="736"/>
        <end position="739"/>
    </location>
</feature>
<feature type="helix" evidence="39">
    <location>
        <begin position="744"/>
        <end position="752"/>
    </location>
</feature>
<feature type="helix" evidence="39">
    <location>
        <begin position="758"/>
        <end position="760"/>
    </location>
</feature>
<feature type="strand" evidence="39">
    <location>
        <begin position="764"/>
        <end position="766"/>
    </location>
</feature>
<feature type="strand" evidence="39">
    <location>
        <begin position="779"/>
        <end position="782"/>
    </location>
</feature>
<feature type="strand" evidence="39">
    <location>
        <begin position="785"/>
        <end position="796"/>
    </location>
</feature>
<feature type="strand" evidence="39">
    <location>
        <begin position="799"/>
        <end position="805"/>
    </location>
</feature>
<feature type="strand" evidence="39">
    <location>
        <begin position="817"/>
        <end position="825"/>
    </location>
</feature>
<feature type="helix" evidence="39">
    <location>
        <begin position="828"/>
        <end position="840"/>
    </location>
</feature>
<feature type="helix" evidence="39">
    <location>
        <begin position="843"/>
        <end position="848"/>
    </location>
</feature>
<feature type="strand" evidence="39">
    <location>
        <begin position="852"/>
        <end position="857"/>
    </location>
</feature>
<feature type="strand" evidence="39">
    <location>
        <begin position="862"/>
        <end position="866"/>
    </location>
</feature>
<feature type="helix" evidence="39">
    <location>
        <begin position="874"/>
        <end position="881"/>
    </location>
</feature>
<feature type="strand" evidence="38">
    <location>
        <begin position="884"/>
        <end position="886"/>
    </location>
</feature>
<feature type="helix" evidence="39">
    <location>
        <begin position="891"/>
        <end position="910"/>
    </location>
</feature>
<feature type="helix" evidence="39">
    <location>
        <begin position="920"/>
        <end position="922"/>
    </location>
</feature>
<feature type="strand" evidence="39">
    <location>
        <begin position="923"/>
        <end position="925"/>
    </location>
</feature>
<feature type="helix" evidence="39">
    <location>
        <begin position="927"/>
        <end position="931"/>
    </location>
</feature>
<feature type="strand" evidence="39">
    <location>
        <begin position="940"/>
        <end position="944"/>
    </location>
</feature>
<feature type="helix" evidence="39">
    <location>
        <begin position="953"/>
        <end position="955"/>
    </location>
</feature>
<feature type="strand" evidence="39">
    <location>
        <begin position="960"/>
        <end position="962"/>
    </location>
</feature>
<feature type="strand" evidence="37">
    <location>
        <begin position="967"/>
        <end position="971"/>
    </location>
</feature>
<feature type="helix" evidence="39">
    <location>
        <begin position="974"/>
        <end position="977"/>
    </location>
</feature>
<feature type="helix" evidence="39">
    <location>
        <begin position="985"/>
        <end position="1000"/>
    </location>
</feature>
<feature type="strand" evidence="39">
    <location>
        <begin position="1006"/>
        <end position="1008"/>
    </location>
</feature>
<feature type="strand" evidence="39">
    <location>
        <begin position="1013"/>
        <end position="1016"/>
    </location>
</feature>
<feature type="helix" evidence="39">
    <location>
        <begin position="1025"/>
        <end position="1036"/>
    </location>
</feature>
<feature type="helix" evidence="39">
    <location>
        <begin position="1047"/>
        <end position="1061"/>
    </location>
</feature>
<feature type="turn" evidence="39">
    <location>
        <begin position="1062"/>
        <end position="1065"/>
    </location>
</feature>
<feature type="helix" evidence="39">
    <location>
        <begin position="1066"/>
        <end position="1081"/>
    </location>
</feature>
<comment type="function">
    <text evidence="7 10 11 12 13 14 18 19 21">Serine/threonine-protein kinase that performs 2 crucial functions during mitosis: it is essential for spindle-assembly checkpoint signaling and for correct chromosome alignment. Has a key role in the assembly of checkpoint proteins at the kinetochore, being required for the subsequent localization of CENPF, BUB1B, CENPE and MAD2L1. Required for the kinetochore localization of PLK1. Required for centromeric enrichment of AUKRB in prometaphase. Plays an important role in defining SGO1 localization and thereby affects sister chromatid cohesion. Promotes the centromeric localization of TOP2A (PubMed:35044816). Acts as a substrate for anaphase-promoting complex or cyclosome (APC/C) in complex with its activator CDH1 (APC/C-Cdh1). Necessary for ensuring proper chromosome segregation and binding to BUB3 is essential for this function. Can regulate chromosome segregation in a kinetochore-independent manner. Can phosphorylate BUB3. The BUB1-BUB3 complex plays a role in the inhibition of APC/C when spindle-assembly checkpoint is activated and inhibits the ubiquitin ligase activity of APC/C by phosphorylating its activator CDC20. This complex can also phosphorylate MAD1L1. Kinase activity is essential for inhibition of APC/CCDC20 and for chromosome alignment but does not play a major role in the spindle-assembly checkpoint activity. Mediates cell death in response to chromosome missegregation and acts to suppress spontaneous tumorigenesis.</text>
</comment>
<comment type="catalytic activity">
    <reaction>
        <text>L-seryl-[protein] + ATP = O-phospho-L-seryl-[protein] + ADP + H(+)</text>
        <dbReference type="Rhea" id="RHEA:17989"/>
        <dbReference type="Rhea" id="RHEA-COMP:9863"/>
        <dbReference type="Rhea" id="RHEA-COMP:11604"/>
        <dbReference type="ChEBI" id="CHEBI:15378"/>
        <dbReference type="ChEBI" id="CHEBI:29999"/>
        <dbReference type="ChEBI" id="CHEBI:30616"/>
        <dbReference type="ChEBI" id="CHEBI:83421"/>
        <dbReference type="ChEBI" id="CHEBI:456216"/>
        <dbReference type="EC" id="2.7.11.1"/>
    </reaction>
</comment>
<comment type="catalytic activity">
    <reaction>
        <text>L-threonyl-[protein] + ATP = O-phospho-L-threonyl-[protein] + ADP + H(+)</text>
        <dbReference type="Rhea" id="RHEA:46608"/>
        <dbReference type="Rhea" id="RHEA-COMP:11060"/>
        <dbReference type="Rhea" id="RHEA-COMP:11605"/>
        <dbReference type="ChEBI" id="CHEBI:15378"/>
        <dbReference type="ChEBI" id="CHEBI:30013"/>
        <dbReference type="ChEBI" id="CHEBI:30616"/>
        <dbReference type="ChEBI" id="CHEBI:61977"/>
        <dbReference type="ChEBI" id="CHEBI:456216"/>
        <dbReference type="EC" id="2.7.11.1"/>
    </reaction>
</comment>
<comment type="activity regulation">
    <text>Autophosphorylated when the cells enters mitosis.</text>
</comment>
<comment type="subunit">
    <text evidence="24 25 26 27">Interacts with BUB3 and KNL1. Interacts (when phosphorylated) with PLK1. The BUB1-BUB3 complex interacts with MAD1L1.</text>
</comment>
<comment type="subunit">
    <text evidence="17">(Microbial infection) Interacts with SV40 Large T antigen; this interaction induces activation of a DNA damage response and promotes p53/TP53 stabilization and phosphorylation.</text>
</comment>
<comment type="subunit">
    <text evidence="20">(Microbial infection) Interacts with herpes virus 8 protein LANA1.</text>
</comment>
<comment type="interaction">
    <interactant intactId="EBI-748936">
        <id>O43683</id>
    </interactant>
    <interactant intactId="EBI-711158">
        <id>O95376</id>
        <label>ARIH2</label>
    </interactant>
    <organismsDiffer>false</organismsDiffer>
    <experiments>5</experiments>
</comment>
<comment type="interaction">
    <interactant intactId="EBI-748936">
        <id>O43683</id>
    </interactant>
    <interactant intactId="EBI-1001438">
        <id>O60566</id>
        <label>BUB1B</label>
    </interactant>
    <organismsDiffer>false</organismsDiffer>
    <experiments>5</experiments>
</comment>
<comment type="interaction">
    <interactant intactId="EBI-748936">
        <id>O43683</id>
    </interactant>
    <interactant intactId="EBI-1050987">
        <id>O43684</id>
        <label>BUB3</label>
    </interactant>
    <organismsDiffer>false</organismsDiffer>
    <experiments>8</experiments>
</comment>
<comment type="interaction">
    <interactant intactId="EBI-748936">
        <id>O43683</id>
    </interactant>
    <interactant intactId="EBI-886">
        <id>P46108</id>
        <label>CRK</label>
    </interactant>
    <organismsDiffer>false</organismsDiffer>
    <experiments>2</experiments>
</comment>
<comment type="interaction">
    <interactant intactId="EBI-748936">
        <id>O43683</id>
    </interactant>
    <interactant intactId="EBI-1001161">
        <id>Q8NG31</id>
        <label>KNL1</label>
    </interactant>
    <organismsDiffer>false</organismsDiffer>
    <experiments>4</experiments>
</comment>
<comment type="interaction">
    <interactant intactId="EBI-748936">
        <id>O43683</id>
    </interactant>
    <interactant intactId="EBI-10973816">
        <id>Q8NG31-2</id>
        <label>KNL1</label>
    </interactant>
    <organismsDiffer>false</organismsDiffer>
    <experiments>3</experiments>
</comment>
<comment type="interaction">
    <interactant intactId="EBI-748936">
        <id>O43683</id>
    </interactant>
    <interactant intactId="EBI-373144">
        <id>Q9GZQ8</id>
        <label>MAP1LC3B</label>
    </interactant>
    <organismsDiffer>false</organismsDiffer>
    <experiments>2</experiments>
</comment>
<comment type="interaction">
    <interactant intactId="EBI-748936">
        <id>O43683</id>
    </interactant>
    <interactant intactId="EBI-617698">
        <id>P03070</id>
    </interactant>
    <organismsDiffer>true</organismsDiffer>
    <experiments>2</experiments>
</comment>
<comment type="subcellular location">
    <subcellularLocation>
        <location>Nucleus</location>
    </subcellularLocation>
    <subcellularLocation>
        <location>Chromosome</location>
        <location>Centromere</location>
        <location>Kinetochore</location>
    </subcellularLocation>
    <text evidence="1">Nuclear in interphase cells. Accumulates gradually during G1 and S phase of the cell cycle, peaks at G2/M, and drops dramatically after mitosis. Localizes to the outer kinetochore. Kinetochore localization is required for normal mitotic timing and checkpoint response to spindle damage and occurs very early in prophase. AURKB, KNL1 and INCENP are required for kinetochore localization (By similarity).</text>
</comment>
<comment type="alternative products">
    <event type="alternative splicing"/>
    <isoform>
        <id>O43683-1</id>
        <name>1</name>
        <sequence type="displayed"/>
    </isoform>
    <isoform>
        <id>O43683-2</id>
        <name>2</name>
        <sequence type="described" ref="VSP_054761"/>
    </isoform>
    <isoform>
        <id>O43683-3</id>
        <name>3</name>
        <sequence type="described" ref="VSP_054760"/>
    </isoform>
</comment>
<comment type="tissue specificity">
    <text>High expression in testis and thymus, less in colon, spleen, lung and small intestine. Expressed in fetal thymus, bone marrow, heart, liver, spleen and thymus. Expression is associated with cells/tissues with a high mitotic index.</text>
</comment>
<comment type="induction">
    <text>Inhibited by phorbol 12-myristate 13-acetate (PMA).</text>
</comment>
<comment type="domain">
    <text evidence="14">The KEN box is required for its ubiquitination and degradation.</text>
</comment>
<comment type="domain">
    <text evidence="14">BUB1 N-terminal domain directs kinetochore localization and binding to BUB3.</text>
</comment>
<comment type="PTM">
    <text evidence="7 11 13">Upon spindle-assembly checkpoint activation it is hyperphosphorylated and its kinase activity toward CDC20 is stimulated. Phosphorylation at Thr-609 is required for interaction with PLK1, phosphorylation at this site probably creates a binding site for the POLO-box domain of PLK1, thus enhancing the PLK1-BUB1 interaction.</text>
</comment>
<comment type="PTM">
    <text evidence="14">Ubiquitinated and degraded during mitotic exit by APC/C-Cdh1.</text>
</comment>
<comment type="disease" evidence="21">
    <disease id="DI-06562">
        <name>Microcephaly 30, primary, autosomal recessive</name>
        <acronym>MCPH30</acronym>
        <description>A form of microcephaly, a disease defined as a head circumference more than 3 standard deviations below the age, sex and ethnically matched mean. Brain weight is markedly reduced and the cerebral cortex is disproportionately small. MCPH30 is characterized by small head, poor overall growth, and global developmental delay with variably impaired intellectual development. Affected individuals may also have variable congenital anomalies, including atrial septal defect, dysmorphic facial features, tracheal stenosis, and anomalies of the skin and teeth.</description>
        <dbReference type="MIM" id="620183"/>
    </disease>
    <text>The disease is caused by variants affecting the gene represented in this entry.</text>
</comment>
<comment type="similarity">
    <text evidence="3">Belongs to the protein kinase superfamily. Ser/Thr protein kinase family. BUB1 subfamily.</text>
</comment>
<comment type="online information" name="Atlas of Genetics and Cytogenetics in Oncology and Haematology">
    <link uri="https://atlasgeneticsoncology.org/gene/853/BUB1"/>
</comment>
<gene>
    <name type="primary">BUB1</name>
    <name type="synonym">BUB1L</name>
</gene>
<sequence>MDTPENVLQMLEAHMQSYKGNDPLGEWERYIQWVEENFPENKEYLITLLEHLMKEFLDKKKYHNDPRFISYCLKFAEYNSDLHQFFEFLYNHGIGTLSSPLYIAWAGHLEAQGELQHASAVLQRGIQNQAEPREFLQQQYRLFQTRLTETHLPAQARTSEPLHNVQVLNQMITSKSNPGNNMACISKNQGSELSGVISSACDKESNMERRVITISKSEYSVHSSLASKVDVEQVVMYCKEKLIRGESEFSFEELRAQKYNQRRKHEQWVNEDRHYMKRKEANAFEEQLLKQKMDELHKKLHQVVETSHEDLPASQERSEVNPARMGPSVGSQQELRAPCLPVTYQQTPVNMEKNPREAPPVVPPLANAISAALVSPATSQSIAPPVPLKAQTVTDSMFAVASKDAGCVNKSTHEFKPQSGAEIKEGCETHKVANTSSFHTTPNTSLGMVQATPSKVQPSPTVHTKEALGFIMNMFQAPTLPDISDDKDEWQSLDQNEDAFEAQFQKNVRSSGAWGVNKIISSLSSAFHVFEDGNKENYGLPQPKNKPTGARTFGERSVSRLPSKPKEEVPHAEEFLDDSTVWGIRCNKTLAPSPKSPGDFTSAAQLASTPFHKLPVESVHILEDKENVVAKQCTQATLDSCEENMVVPSRDGKFSPIQEKSPKQALSSHMYSASLLRLSQPAAGGVLTCEAELGVEACRLTDTDAAIAEDPPDAIAGLQAEWMQMSSLGTVDAPNFIVGNPWDDKLIFKLLSGLSKPVSSYPNTFEWQCKLPAIKPKTEFQLGSKLVYVHHLLGEGAFAQVYEATQGDLNDAKNKQKFVLKVQKPANPWEFYIGTQLMERLKPSMQHMFMKFYSAHLFQNGSVLVGELYSYGTLLNAINLYKNTPEKVMPQGLVISFAMRMLYMIEQVHDCEIIHGDIKPDNFILGNGFLEQDDEDDLSAGLALIDLGQSIDMKLFPKGTIFTAKCETSGFQCVEMLSNKPWNYQIDYFGVAATVYCMLFGTYMKVKNEGGECKPEGLFRRLPHLDMWNEFFHVMLNIPDCHHLPSLDLLRQKLKKVFQQHYTNKIRALRNRLIVLLLECKRSRK</sequence>
<dbReference type="EC" id="2.7.11.1"/>
<dbReference type="EMBL" id="AF046078">
    <property type="protein sequence ID" value="AAC12729.1"/>
    <property type="molecule type" value="mRNA"/>
</dbReference>
<dbReference type="EMBL" id="AF043294">
    <property type="protein sequence ID" value="AAB97855.2"/>
    <property type="molecule type" value="mRNA"/>
</dbReference>
<dbReference type="EMBL" id="AF053305">
    <property type="protein sequence ID" value="AAC06259.1"/>
    <property type="molecule type" value="mRNA"/>
</dbReference>
<dbReference type="EMBL" id="AF047471">
    <property type="protein sequence ID" value="AAC03122.1"/>
    <property type="molecule type" value="mRNA"/>
</dbReference>
<dbReference type="EMBL" id="AF139363">
    <property type="protein sequence ID" value="AAD43675.1"/>
    <property type="molecule type" value="Genomic_DNA"/>
</dbReference>
<dbReference type="EMBL" id="AF139349">
    <property type="protein sequence ID" value="AAD43675.1"/>
    <property type="status" value="JOINED"/>
    <property type="molecule type" value="Genomic_DNA"/>
</dbReference>
<dbReference type="EMBL" id="AF139350">
    <property type="protein sequence ID" value="AAD43675.1"/>
    <property type="status" value="JOINED"/>
    <property type="molecule type" value="Genomic_DNA"/>
</dbReference>
<dbReference type="EMBL" id="AF139351">
    <property type="protein sequence ID" value="AAD43675.1"/>
    <property type="status" value="JOINED"/>
    <property type="molecule type" value="Genomic_DNA"/>
</dbReference>
<dbReference type="EMBL" id="AF139352">
    <property type="protein sequence ID" value="AAD43675.1"/>
    <property type="status" value="JOINED"/>
    <property type="molecule type" value="Genomic_DNA"/>
</dbReference>
<dbReference type="EMBL" id="AF139353">
    <property type="protein sequence ID" value="AAD43675.1"/>
    <property type="status" value="JOINED"/>
    <property type="molecule type" value="Genomic_DNA"/>
</dbReference>
<dbReference type="EMBL" id="AF139354">
    <property type="protein sequence ID" value="AAD43675.1"/>
    <property type="status" value="JOINED"/>
    <property type="molecule type" value="Genomic_DNA"/>
</dbReference>
<dbReference type="EMBL" id="AF139355">
    <property type="protein sequence ID" value="AAD43675.1"/>
    <property type="status" value="JOINED"/>
    <property type="molecule type" value="Genomic_DNA"/>
</dbReference>
<dbReference type="EMBL" id="AF139356">
    <property type="protein sequence ID" value="AAD43675.1"/>
    <property type="status" value="JOINED"/>
    <property type="molecule type" value="Genomic_DNA"/>
</dbReference>
<dbReference type="EMBL" id="AF139357">
    <property type="protein sequence ID" value="AAD43675.1"/>
    <property type="status" value="JOINED"/>
    <property type="molecule type" value="Genomic_DNA"/>
</dbReference>
<dbReference type="EMBL" id="AF139358">
    <property type="protein sequence ID" value="AAD43675.1"/>
    <property type="status" value="JOINED"/>
    <property type="molecule type" value="Genomic_DNA"/>
</dbReference>
<dbReference type="EMBL" id="AF139359">
    <property type="protein sequence ID" value="AAD43675.1"/>
    <property type="status" value="JOINED"/>
    <property type="molecule type" value="Genomic_DNA"/>
</dbReference>
<dbReference type="EMBL" id="AF139360">
    <property type="protein sequence ID" value="AAD43675.1"/>
    <property type="status" value="JOINED"/>
    <property type="molecule type" value="Genomic_DNA"/>
</dbReference>
<dbReference type="EMBL" id="AF139361">
    <property type="protein sequence ID" value="AAD43675.1"/>
    <property type="status" value="JOINED"/>
    <property type="molecule type" value="Genomic_DNA"/>
</dbReference>
<dbReference type="EMBL" id="AF139362">
    <property type="protein sequence ID" value="AAD43675.1"/>
    <property type="status" value="JOINED"/>
    <property type="molecule type" value="Genomic_DNA"/>
</dbReference>
<dbReference type="EMBL" id="AC114776">
    <property type="protein sequence ID" value="AAY14706.1"/>
    <property type="molecule type" value="Genomic_DNA"/>
</dbReference>
<dbReference type="EMBL" id="AC226101">
    <property type="status" value="NOT_ANNOTATED_CDS"/>
    <property type="molecule type" value="Genomic_DNA"/>
</dbReference>
<dbReference type="EMBL" id="CH471237">
    <property type="protein sequence ID" value="EAW50355.1"/>
    <property type="molecule type" value="Genomic_DNA"/>
</dbReference>
<dbReference type="EMBL" id="BC028201">
    <property type="protein sequence ID" value="AAH28201.1"/>
    <property type="molecule type" value="mRNA"/>
</dbReference>
<dbReference type="EMBL" id="AF011387">
    <property type="protein sequence ID" value="AAC39546.1"/>
    <property type="molecule type" value="mRNA"/>
</dbReference>
<dbReference type="CCDS" id="CCDS33273.1">
    <molecule id="O43683-1"/>
</dbReference>
<dbReference type="CCDS" id="CCDS62984.1">
    <molecule id="O43683-3"/>
</dbReference>
<dbReference type="CCDS" id="CCDS62985.1">
    <molecule id="O43683-2"/>
</dbReference>
<dbReference type="RefSeq" id="NP_001265545.1">
    <molecule id="O43683-3"/>
    <property type="nucleotide sequence ID" value="NM_001278616.2"/>
</dbReference>
<dbReference type="RefSeq" id="NP_001265546.1">
    <molecule id="O43683-2"/>
    <property type="nucleotide sequence ID" value="NM_001278617.2"/>
</dbReference>
<dbReference type="RefSeq" id="NP_004327.1">
    <molecule id="O43683-1"/>
    <property type="nucleotide sequence ID" value="NM_004336.5"/>
</dbReference>
<dbReference type="PDB" id="2LAH">
    <property type="method" value="NMR"/>
    <property type="chains" value="A=1-150"/>
</dbReference>
<dbReference type="PDB" id="4A1G">
    <property type="method" value="X-ray"/>
    <property type="resolution" value="2.60 A"/>
    <property type="chains" value="A/B/C/D=1-150"/>
</dbReference>
<dbReference type="PDB" id="4QPM">
    <property type="method" value="X-ray"/>
    <property type="resolution" value="2.20 A"/>
    <property type="chains" value="A/B=740-1085"/>
</dbReference>
<dbReference type="PDB" id="4R8Q">
    <property type="method" value="X-ray"/>
    <property type="resolution" value="2.31 A"/>
    <property type="chains" value="A=724-1085"/>
</dbReference>
<dbReference type="PDB" id="5DMZ">
    <property type="method" value="X-ray"/>
    <property type="resolution" value="2.40 A"/>
    <property type="chains" value="A/B=726-1085"/>
</dbReference>
<dbReference type="PDB" id="6F7B">
    <property type="method" value="X-ray"/>
    <property type="resolution" value="2.00 A"/>
    <property type="chains" value="A=726-1085"/>
</dbReference>
<dbReference type="PDB" id="7B1F">
    <property type="method" value="X-ray"/>
    <property type="resolution" value="1.75 A"/>
    <property type="chains" value="C/D=455-479"/>
</dbReference>
<dbReference type="PDB" id="7B1H">
    <property type="method" value="X-ray"/>
    <property type="resolution" value="2.40 A"/>
    <property type="chains" value="C/D/G/H=455-479"/>
</dbReference>
<dbReference type="PDB" id="7B1J">
    <property type="method" value="X-ray"/>
    <property type="resolution" value="2.90 A"/>
    <property type="chains" value="C/D=455-479"/>
</dbReference>
<dbReference type="PDBsum" id="2LAH"/>
<dbReference type="PDBsum" id="4A1G"/>
<dbReference type="PDBsum" id="4QPM"/>
<dbReference type="PDBsum" id="4R8Q"/>
<dbReference type="PDBsum" id="5DMZ"/>
<dbReference type="PDBsum" id="6F7B"/>
<dbReference type="PDBsum" id="7B1F"/>
<dbReference type="PDBsum" id="7B1H"/>
<dbReference type="PDBsum" id="7B1J"/>
<dbReference type="BMRB" id="O43683"/>
<dbReference type="SMR" id="O43683"/>
<dbReference type="BioGRID" id="107164">
    <property type="interactions" value="136"/>
</dbReference>
<dbReference type="CORUM" id="O43683"/>
<dbReference type="DIP" id="DIP-24206N"/>
<dbReference type="ELM" id="O43683"/>
<dbReference type="FunCoup" id="O43683">
    <property type="interactions" value="2170"/>
</dbReference>
<dbReference type="IntAct" id="O43683">
    <property type="interactions" value="108"/>
</dbReference>
<dbReference type="MINT" id="O43683"/>
<dbReference type="STRING" id="9606.ENSP00000302530"/>
<dbReference type="BindingDB" id="O43683"/>
<dbReference type="ChEMBL" id="CHEMBL1772932"/>
<dbReference type="DrugCentral" id="O43683"/>
<dbReference type="GuidetoPHARMACOLOGY" id="1949"/>
<dbReference type="GlyGen" id="O43683">
    <property type="glycosylation" value="1 site, 1 O-linked glycan (1 site)"/>
</dbReference>
<dbReference type="iPTMnet" id="O43683"/>
<dbReference type="PhosphoSitePlus" id="O43683"/>
<dbReference type="BioMuta" id="BUB1"/>
<dbReference type="jPOST" id="O43683"/>
<dbReference type="MassIVE" id="O43683"/>
<dbReference type="PaxDb" id="9606-ENSP00000302530"/>
<dbReference type="PeptideAtlas" id="O43683"/>
<dbReference type="ProteomicsDB" id="19348"/>
<dbReference type="ProteomicsDB" id="24432"/>
<dbReference type="ProteomicsDB" id="49112">
    <molecule id="O43683-1"/>
</dbReference>
<dbReference type="Pumba" id="O43683"/>
<dbReference type="Antibodypedia" id="1133">
    <property type="antibodies" value="546 antibodies from 41 providers"/>
</dbReference>
<dbReference type="DNASU" id="699"/>
<dbReference type="Ensembl" id="ENST00000302759.11">
    <molecule id="O43683-1"/>
    <property type="protein sequence ID" value="ENSP00000302530.6"/>
    <property type="gene ID" value="ENSG00000169679.15"/>
</dbReference>
<dbReference type="Ensembl" id="ENST00000409311.5">
    <molecule id="O43683-2"/>
    <property type="protein sequence ID" value="ENSP00000386701.1"/>
    <property type="gene ID" value="ENSG00000169679.15"/>
</dbReference>
<dbReference type="Ensembl" id="ENST00000535254.6">
    <molecule id="O43683-3"/>
    <property type="protein sequence ID" value="ENSP00000441013.1"/>
    <property type="gene ID" value="ENSG00000169679.15"/>
</dbReference>
<dbReference type="GeneID" id="699"/>
<dbReference type="KEGG" id="hsa:699"/>
<dbReference type="MANE-Select" id="ENST00000302759.11">
    <property type="protein sequence ID" value="ENSP00000302530.6"/>
    <property type="RefSeq nucleotide sequence ID" value="NM_004336.5"/>
    <property type="RefSeq protein sequence ID" value="NP_004327.1"/>
</dbReference>
<dbReference type="UCSC" id="uc002tgc.5">
    <molecule id="O43683-1"/>
    <property type="organism name" value="human"/>
</dbReference>
<dbReference type="AGR" id="HGNC:1148"/>
<dbReference type="CTD" id="699"/>
<dbReference type="DisGeNET" id="699"/>
<dbReference type="GeneCards" id="BUB1"/>
<dbReference type="HGNC" id="HGNC:1148">
    <property type="gene designation" value="BUB1"/>
</dbReference>
<dbReference type="HPA" id="ENSG00000169679">
    <property type="expression patterns" value="Group enriched (bone marrow, lymphoid tissue, testis)"/>
</dbReference>
<dbReference type="MalaCards" id="BUB1"/>
<dbReference type="MIM" id="602452">
    <property type="type" value="gene"/>
</dbReference>
<dbReference type="MIM" id="620183">
    <property type="type" value="phenotype"/>
</dbReference>
<dbReference type="neXtProt" id="NX_O43683"/>
<dbReference type="OpenTargets" id="ENSG00000169679"/>
<dbReference type="Orphanet" id="1052">
    <property type="disease" value="Mosaic variegated aneuploidy syndrome"/>
</dbReference>
<dbReference type="PharmGKB" id="PA81"/>
<dbReference type="VEuPathDB" id="HostDB:ENSG00000169679"/>
<dbReference type="eggNOG" id="KOG1166">
    <property type="taxonomic scope" value="Eukaryota"/>
</dbReference>
<dbReference type="GeneTree" id="ENSGT00940000157865"/>
<dbReference type="HOGENOM" id="CLU_296458_0_0_1"/>
<dbReference type="InParanoid" id="O43683"/>
<dbReference type="OMA" id="NCEKGVG"/>
<dbReference type="OrthoDB" id="248495at2759"/>
<dbReference type="PAN-GO" id="O43683">
    <property type="GO annotations" value="3 GO annotations based on evolutionary models"/>
</dbReference>
<dbReference type="PhylomeDB" id="O43683"/>
<dbReference type="TreeFam" id="TF105455"/>
<dbReference type="BRENDA" id="2.7.11.1">
    <property type="organism ID" value="2681"/>
</dbReference>
<dbReference type="PathwayCommons" id="O43683"/>
<dbReference type="Reactome" id="R-HSA-141444">
    <property type="pathway name" value="Amplification of signal from unattached kinetochores via a MAD2 inhibitory signal"/>
</dbReference>
<dbReference type="Reactome" id="R-HSA-2467813">
    <property type="pathway name" value="Separation of Sister Chromatids"/>
</dbReference>
<dbReference type="Reactome" id="R-HSA-2500257">
    <property type="pathway name" value="Resolution of Sister Chromatid Cohesion"/>
</dbReference>
<dbReference type="Reactome" id="R-HSA-5663220">
    <property type="pathway name" value="RHO GTPases Activate Formins"/>
</dbReference>
<dbReference type="Reactome" id="R-HSA-68877">
    <property type="pathway name" value="Mitotic Prometaphase"/>
</dbReference>
<dbReference type="Reactome" id="R-HSA-9648025">
    <property type="pathway name" value="EML4 and NUDC in mitotic spindle formation"/>
</dbReference>
<dbReference type="SignaLink" id="O43683"/>
<dbReference type="SIGNOR" id="O43683"/>
<dbReference type="BioGRID-ORCS" id="699">
    <property type="hits" value="580 hits in 1208 CRISPR screens"/>
</dbReference>
<dbReference type="ChiTaRS" id="BUB1">
    <property type="organism name" value="human"/>
</dbReference>
<dbReference type="EvolutionaryTrace" id="O43683"/>
<dbReference type="GeneWiki" id="BUB1"/>
<dbReference type="GenomeRNAi" id="699"/>
<dbReference type="Pharos" id="O43683">
    <property type="development level" value="Tchem"/>
</dbReference>
<dbReference type="PRO" id="PR:O43683"/>
<dbReference type="Proteomes" id="UP000005640">
    <property type="component" value="Chromosome 2"/>
</dbReference>
<dbReference type="RNAct" id="O43683">
    <property type="molecule type" value="protein"/>
</dbReference>
<dbReference type="Bgee" id="ENSG00000169679">
    <property type="expression patterns" value="Expressed in ventricular zone and 113 other cell types or tissues"/>
</dbReference>
<dbReference type="ExpressionAtlas" id="O43683">
    <property type="expression patterns" value="baseline and differential"/>
</dbReference>
<dbReference type="GO" id="GO:0005829">
    <property type="term" value="C:cytosol"/>
    <property type="evidence" value="ECO:0000314"/>
    <property type="project" value="HPA"/>
</dbReference>
<dbReference type="GO" id="GO:0043231">
    <property type="term" value="C:intracellular membrane-bounded organelle"/>
    <property type="evidence" value="ECO:0000314"/>
    <property type="project" value="HPA"/>
</dbReference>
<dbReference type="GO" id="GO:0000776">
    <property type="term" value="C:kinetochore"/>
    <property type="evidence" value="ECO:0000314"/>
    <property type="project" value="UniProtKB"/>
</dbReference>
<dbReference type="GO" id="GO:0016020">
    <property type="term" value="C:membrane"/>
    <property type="evidence" value="ECO:0007005"/>
    <property type="project" value="UniProtKB"/>
</dbReference>
<dbReference type="GO" id="GO:0005654">
    <property type="term" value="C:nucleoplasm"/>
    <property type="evidence" value="ECO:0000314"/>
    <property type="project" value="HPA"/>
</dbReference>
<dbReference type="GO" id="GO:0005634">
    <property type="term" value="C:nucleus"/>
    <property type="evidence" value="ECO:0000318"/>
    <property type="project" value="GO_Central"/>
</dbReference>
<dbReference type="GO" id="GO:0000940">
    <property type="term" value="C:outer kinetochore"/>
    <property type="evidence" value="ECO:0000314"/>
    <property type="project" value="UniProtKB"/>
</dbReference>
<dbReference type="GO" id="GO:0005524">
    <property type="term" value="F:ATP binding"/>
    <property type="evidence" value="ECO:0007669"/>
    <property type="project" value="UniProtKB-KW"/>
</dbReference>
<dbReference type="GO" id="GO:0140995">
    <property type="term" value="F:histone H2A kinase activity"/>
    <property type="evidence" value="ECO:0000314"/>
    <property type="project" value="UniProtKB"/>
</dbReference>
<dbReference type="GO" id="GO:0004672">
    <property type="term" value="F:protein kinase activity"/>
    <property type="evidence" value="ECO:0000314"/>
    <property type="project" value="UniProtKB"/>
</dbReference>
<dbReference type="GO" id="GO:0106310">
    <property type="term" value="F:protein serine kinase activity"/>
    <property type="evidence" value="ECO:0007669"/>
    <property type="project" value="RHEA"/>
</dbReference>
<dbReference type="GO" id="GO:0004674">
    <property type="term" value="F:protein serine/threonine kinase activity"/>
    <property type="evidence" value="ECO:0000314"/>
    <property type="project" value="UniProtKB"/>
</dbReference>
<dbReference type="GO" id="GO:0006915">
    <property type="term" value="P:apoptotic process"/>
    <property type="evidence" value="ECO:0007669"/>
    <property type="project" value="UniProtKB-KW"/>
</dbReference>
<dbReference type="GO" id="GO:0051301">
    <property type="term" value="P:cell division"/>
    <property type="evidence" value="ECO:0007669"/>
    <property type="project" value="UniProtKB-KW"/>
</dbReference>
<dbReference type="GO" id="GO:0007059">
    <property type="term" value="P:chromosome segregation"/>
    <property type="evidence" value="ECO:0007669"/>
    <property type="project" value="UniProtKB-KW"/>
</dbReference>
<dbReference type="GO" id="GO:0051754">
    <property type="term" value="P:meiotic sister chromatid cohesion, centromeric"/>
    <property type="evidence" value="ECO:0000318"/>
    <property type="project" value="GO_Central"/>
</dbReference>
<dbReference type="GO" id="GO:0007094">
    <property type="term" value="P:mitotic spindle assembly checkpoint signaling"/>
    <property type="evidence" value="ECO:0000315"/>
    <property type="project" value="UniProtKB"/>
</dbReference>
<dbReference type="GO" id="GO:2000720">
    <property type="term" value="P:positive regulation of maintenance of mitotic sister chromatid cohesion, centromeric"/>
    <property type="evidence" value="ECO:0000315"/>
    <property type="project" value="UniProtKB"/>
</dbReference>
<dbReference type="GO" id="GO:0051983">
    <property type="term" value="P:regulation of chromosome segregation"/>
    <property type="evidence" value="ECO:0000315"/>
    <property type="project" value="UniProtKB"/>
</dbReference>
<dbReference type="GO" id="GO:0007063">
    <property type="term" value="P:regulation of sister chromatid cohesion"/>
    <property type="evidence" value="ECO:0000314"/>
    <property type="project" value="UniProtKB"/>
</dbReference>
<dbReference type="CDD" id="cd14028">
    <property type="entry name" value="STKc_Bub1_vert"/>
    <property type="match status" value="1"/>
</dbReference>
<dbReference type="FunFam" id="1.10.510.10:FF:000390">
    <property type="entry name" value="Mitotic checkpoint serine/threonine-protein kinase BUB1"/>
    <property type="match status" value="1"/>
</dbReference>
<dbReference type="FunFam" id="1.25.40.430:FF:000001">
    <property type="entry name" value="Mitotic checkpoint serine/threonine-protein kinase BUB1"/>
    <property type="match status" value="1"/>
</dbReference>
<dbReference type="Gene3D" id="1.25.40.430">
    <property type="match status" value="1"/>
</dbReference>
<dbReference type="Gene3D" id="6.10.130.20">
    <property type="match status" value="1"/>
</dbReference>
<dbReference type="Gene3D" id="1.10.510.10">
    <property type="entry name" value="Transferase(Phosphotransferase) domain 1"/>
    <property type="match status" value="1"/>
</dbReference>
<dbReference type="IDEAL" id="IID00406"/>
<dbReference type="InterPro" id="IPR015661">
    <property type="entry name" value="Bub1/Mad3"/>
</dbReference>
<dbReference type="InterPro" id="IPR011009">
    <property type="entry name" value="Kinase-like_dom_sf"/>
</dbReference>
<dbReference type="InterPro" id="IPR013212">
    <property type="entry name" value="Mad3/Bub1_I"/>
</dbReference>
<dbReference type="InterPro" id="IPR000719">
    <property type="entry name" value="Prot_kinase_dom"/>
</dbReference>
<dbReference type="InterPro" id="IPR017441">
    <property type="entry name" value="Protein_kinase_ATP_BS"/>
</dbReference>
<dbReference type="InterPro" id="IPR008271">
    <property type="entry name" value="Ser/Thr_kinase_AS"/>
</dbReference>
<dbReference type="PANTHER" id="PTHR14030">
    <property type="entry name" value="MITOTIC CHECKPOINT SERINE/THREONINE-PROTEIN KINASE BUB1"/>
    <property type="match status" value="1"/>
</dbReference>
<dbReference type="PANTHER" id="PTHR14030:SF26">
    <property type="entry name" value="MITOTIC CHECKPOINT SERINE_THREONINE-PROTEIN KINASE BUB1"/>
    <property type="match status" value="1"/>
</dbReference>
<dbReference type="Pfam" id="PF08311">
    <property type="entry name" value="Mad3_BUB1_I"/>
    <property type="match status" value="1"/>
</dbReference>
<dbReference type="Pfam" id="PF00069">
    <property type="entry name" value="Pkinase"/>
    <property type="match status" value="1"/>
</dbReference>
<dbReference type="SMART" id="SM00777">
    <property type="entry name" value="Mad3_BUB1_I"/>
    <property type="match status" value="1"/>
</dbReference>
<dbReference type="SMART" id="SM00220">
    <property type="entry name" value="S_TKc"/>
    <property type="match status" value="1"/>
</dbReference>
<dbReference type="SUPFAM" id="SSF56112">
    <property type="entry name" value="Protein kinase-like (PK-like)"/>
    <property type="match status" value="1"/>
</dbReference>
<dbReference type="PROSITE" id="PS51489">
    <property type="entry name" value="BUB1_N"/>
    <property type="match status" value="1"/>
</dbReference>
<dbReference type="PROSITE" id="PS00107">
    <property type="entry name" value="PROTEIN_KINASE_ATP"/>
    <property type="match status" value="1"/>
</dbReference>
<dbReference type="PROSITE" id="PS50011">
    <property type="entry name" value="PROTEIN_KINASE_DOM"/>
    <property type="match status" value="1"/>
</dbReference>
<dbReference type="PROSITE" id="PS00108">
    <property type="entry name" value="PROTEIN_KINASE_ST"/>
    <property type="match status" value="1"/>
</dbReference>